<name>TPIS_BACP2</name>
<evidence type="ECO:0000255" key="1">
    <source>
        <dbReference type="HAMAP-Rule" id="MF_00147"/>
    </source>
</evidence>
<keyword id="KW-0963">Cytoplasm</keyword>
<keyword id="KW-0312">Gluconeogenesis</keyword>
<keyword id="KW-0324">Glycolysis</keyword>
<keyword id="KW-0413">Isomerase</keyword>
<keyword id="KW-0597">Phosphoprotein</keyword>
<feature type="chain" id="PRO_1000058108" description="Triosephosphate isomerase">
    <location>
        <begin position="1"/>
        <end position="253"/>
    </location>
</feature>
<feature type="active site" description="Electrophile" evidence="1">
    <location>
        <position position="95"/>
    </location>
</feature>
<feature type="active site" description="Proton acceptor" evidence="1">
    <location>
        <position position="167"/>
    </location>
</feature>
<feature type="binding site" evidence="1">
    <location>
        <begin position="9"/>
        <end position="11"/>
    </location>
    <ligand>
        <name>substrate</name>
    </ligand>
</feature>
<feature type="binding site" evidence="1">
    <location>
        <position position="173"/>
    </location>
    <ligand>
        <name>substrate</name>
    </ligand>
</feature>
<feature type="binding site" evidence="1">
    <location>
        <position position="213"/>
    </location>
    <ligand>
        <name>substrate</name>
    </ligand>
</feature>
<feature type="binding site" evidence="1">
    <location>
        <begin position="234"/>
        <end position="235"/>
    </location>
    <ligand>
        <name>substrate</name>
    </ligand>
</feature>
<feature type="modified residue" description="Phosphoserine" evidence="1">
    <location>
        <position position="213"/>
    </location>
</feature>
<proteinExistence type="inferred from homology"/>
<accession>A8FHJ2</accession>
<organism>
    <name type="scientific">Bacillus pumilus (strain SAFR-032)</name>
    <dbReference type="NCBI Taxonomy" id="315750"/>
    <lineage>
        <taxon>Bacteria</taxon>
        <taxon>Bacillati</taxon>
        <taxon>Bacillota</taxon>
        <taxon>Bacilli</taxon>
        <taxon>Bacillales</taxon>
        <taxon>Bacillaceae</taxon>
        <taxon>Bacillus</taxon>
    </lineage>
</organism>
<gene>
    <name evidence="1" type="primary">tpiA</name>
    <name type="ordered locus">BPUM_3055</name>
</gene>
<protein>
    <recommendedName>
        <fullName evidence="1">Triosephosphate isomerase</fullName>
        <shortName evidence="1">TIM</shortName>
        <shortName evidence="1">TPI</shortName>
        <ecNumber evidence="1">5.3.1.1</ecNumber>
    </recommendedName>
    <alternativeName>
        <fullName evidence="1">Triose-phosphate isomerase</fullName>
    </alternativeName>
</protein>
<sequence length="253" mass="27268">MRKPIIAGNWKMNKTLGEAVSFVEEVKSSIPYPDKVEAIVCAPALFLEKLNSLSNGTDLKIGAQNMHFEENGAFTGEISPAALKDLGIGYSVIGHSERREFFAETDETVNKKAHAAFKHGIVPIICVGETLEEREAGKTNELVADQVKKALAGFTTQQVAESVIAYEPIWAIGTGKSSTAKDANDVCAHIRQTVASEYGQEAADSLRIQYGGSVKPANIKEYMAESDIDGALVGGASLEPQSFVQLLEEGQYE</sequence>
<reference key="1">
    <citation type="journal article" date="2007" name="PLoS ONE">
        <title>Paradoxical DNA repair and peroxide resistance gene conservation in Bacillus pumilus SAFR-032.</title>
        <authorList>
            <person name="Gioia J."/>
            <person name="Yerrapragada S."/>
            <person name="Qin X."/>
            <person name="Jiang H."/>
            <person name="Igboeli O.C."/>
            <person name="Muzny D."/>
            <person name="Dugan-Rocha S."/>
            <person name="Ding Y."/>
            <person name="Hawes A."/>
            <person name="Liu W."/>
            <person name="Perez L."/>
            <person name="Kovar C."/>
            <person name="Dinh H."/>
            <person name="Lee S."/>
            <person name="Nazareth L."/>
            <person name="Blyth P."/>
            <person name="Holder M."/>
            <person name="Buhay C."/>
            <person name="Tirumalai M.R."/>
            <person name="Liu Y."/>
            <person name="Dasgupta I."/>
            <person name="Bokhetache L."/>
            <person name="Fujita M."/>
            <person name="Karouia F."/>
            <person name="Eswara Moorthy P."/>
            <person name="Siefert J."/>
            <person name="Uzman A."/>
            <person name="Buzumbo P."/>
            <person name="Verma A."/>
            <person name="Zwiya H."/>
            <person name="McWilliams B.D."/>
            <person name="Olowu A."/>
            <person name="Clinkenbeard K.D."/>
            <person name="Newcombe D."/>
            <person name="Golebiewski L."/>
            <person name="Petrosino J.F."/>
            <person name="Nicholson W.L."/>
            <person name="Fox G.E."/>
            <person name="Venkateswaran K."/>
            <person name="Highlander S.K."/>
            <person name="Weinstock G.M."/>
        </authorList>
    </citation>
    <scope>NUCLEOTIDE SEQUENCE [LARGE SCALE GENOMIC DNA]</scope>
    <source>
        <strain>SAFR-032</strain>
    </source>
</reference>
<dbReference type="EC" id="5.3.1.1" evidence="1"/>
<dbReference type="EMBL" id="CP000813">
    <property type="protein sequence ID" value="ABV63709.1"/>
    <property type="molecule type" value="Genomic_DNA"/>
</dbReference>
<dbReference type="RefSeq" id="WP_012011302.1">
    <property type="nucleotide sequence ID" value="NC_009848.4"/>
</dbReference>
<dbReference type="SMR" id="A8FHJ2"/>
<dbReference type="STRING" id="315750.BPUM_3055"/>
<dbReference type="GeneID" id="5622345"/>
<dbReference type="KEGG" id="bpu:BPUM_3055"/>
<dbReference type="eggNOG" id="COG0149">
    <property type="taxonomic scope" value="Bacteria"/>
</dbReference>
<dbReference type="HOGENOM" id="CLU_024251_2_3_9"/>
<dbReference type="OrthoDB" id="9809429at2"/>
<dbReference type="UniPathway" id="UPA00109">
    <property type="reaction ID" value="UER00189"/>
</dbReference>
<dbReference type="UniPathway" id="UPA00138"/>
<dbReference type="Proteomes" id="UP000001355">
    <property type="component" value="Chromosome"/>
</dbReference>
<dbReference type="GO" id="GO:0005829">
    <property type="term" value="C:cytosol"/>
    <property type="evidence" value="ECO:0007669"/>
    <property type="project" value="TreeGrafter"/>
</dbReference>
<dbReference type="GO" id="GO:0004807">
    <property type="term" value="F:triose-phosphate isomerase activity"/>
    <property type="evidence" value="ECO:0007669"/>
    <property type="project" value="UniProtKB-UniRule"/>
</dbReference>
<dbReference type="GO" id="GO:0006094">
    <property type="term" value="P:gluconeogenesis"/>
    <property type="evidence" value="ECO:0007669"/>
    <property type="project" value="UniProtKB-UniRule"/>
</dbReference>
<dbReference type="GO" id="GO:0046166">
    <property type="term" value="P:glyceraldehyde-3-phosphate biosynthetic process"/>
    <property type="evidence" value="ECO:0007669"/>
    <property type="project" value="TreeGrafter"/>
</dbReference>
<dbReference type="GO" id="GO:0019563">
    <property type="term" value="P:glycerol catabolic process"/>
    <property type="evidence" value="ECO:0007669"/>
    <property type="project" value="TreeGrafter"/>
</dbReference>
<dbReference type="GO" id="GO:0006096">
    <property type="term" value="P:glycolytic process"/>
    <property type="evidence" value="ECO:0007669"/>
    <property type="project" value="UniProtKB-UniRule"/>
</dbReference>
<dbReference type="CDD" id="cd00311">
    <property type="entry name" value="TIM"/>
    <property type="match status" value="1"/>
</dbReference>
<dbReference type="FunFam" id="3.20.20.70:FF:000016">
    <property type="entry name" value="Triosephosphate isomerase"/>
    <property type="match status" value="1"/>
</dbReference>
<dbReference type="Gene3D" id="3.20.20.70">
    <property type="entry name" value="Aldolase class I"/>
    <property type="match status" value="1"/>
</dbReference>
<dbReference type="HAMAP" id="MF_00147_B">
    <property type="entry name" value="TIM_B"/>
    <property type="match status" value="1"/>
</dbReference>
<dbReference type="InterPro" id="IPR013785">
    <property type="entry name" value="Aldolase_TIM"/>
</dbReference>
<dbReference type="InterPro" id="IPR035990">
    <property type="entry name" value="TIM_sf"/>
</dbReference>
<dbReference type="InterPro" id="IPR022896">
    <property type="entry name" value="TrioseP_Isoase_bac/euk"/>
</dbReference>
<dbReference type="InterPro" id="IPR000652">
    <property type="entry name" value="Triosephosphate_isomerase"/>
</dbReference>
<dbReference type="InterPro" id="IPR020861">
    <property type="entry name" value="Triosephosphate_isomerase_AS"/>
</dbReference>
<dbReference type="NCBIfam" id="TIGR00419">
    <property type="entry name" value="tim"/>
    <property type="match status" value="1"/>
</dbReference>
<dbReference type="PANTHER" id="PTHR21139">
    <property type="entry name" value="TRIOSEPHOSPHATE ISOMERASE"/>
    <property type="match status" value="1"/>
</dbReference>
<dbReference type="PANTHER" id="PTHR21139:SF42">
    <property type="entry name" value="TRIOSEPHOSPHATE ISOMERASE"/>
    <property type="match status" value="1"/>
</dbReference>
<dbReference type="Pfam" id="PF00121">
    <property type="entry name" value="TIM"/>
    <property type="match status" value="1"/>
</dbReference>
<dbReference type="SUPFAM" id="SSF51351">
    <property type="entry name" value="Triosephosphate isomerase (TIM)"/>
    <property type="match status" value="1"/>
</dbReference>
<dbReference type="PROSITE" id="PS00171">
    <property type="entry name" value="TIM_1"/>
    <property type="match status" value="1"/>
</dbReference>
<dbReference type="PROSITE" id="PS51440">
    <property type="entry name" value="TIM_2"/>
    <property type="match status" value="1"/>
</dbReference>
<comment type="function">
    <text evidence="1">Involved in the gluconeogenesis. Catalyzes stereospecifically the conversion of dihydroxyacetone phosphate (DHAP) to D-glyceraldehyde-3-phosphate (G3P).</text>
</comment>
<comment type="catalytic activity">
    <reaction evidence="1">
        <text>D-glyceraldehyde 3-phosphate = dihydroxyacetone phosphate</text>
        <dbReference type="Rhea" id="RHEA:18585"/>
        <dbReference type="ChEBI" id="CHEBI:57642"/>
        <dbReference type="ChEBI" id="CHEBI:59776"/>
        <dbReference type="EC" id="5.3.1.1"/>
    </reaction>
</comment>
<comment type="pathway">
    <text evidence="1">Carbohydrate biosynthesis; gluconeogenesis.</text>
</comment>
<comment type="pathway">
    <text evidence="1">Carbohydrate degradation; glycolysis; D-glyceraldehyde 3-phosphate from glycerone phosphate: step 1/1.</text>
</comment>
<comment type="subunit">
    <text evidence="1">Homodimer.</text>
</comment>
<comment type="subcellular location">
    <subcellularLocation>
        <location evidence="1">Cytoplasm</location>
    </subcellularLocation>
</comment>
<comment type="similarity">
    <text evidence="1">Belongs to the triosephosphate isomerase family.</text>
</comment>